<accession>B1B212</accession>
<keyword id="KW-1003">Cell membrane</keyword>
<keyword id="KW-0325">Glycoprotein</keyword>
<keyword id="KW-0391">Immunity</keyword>
<keyword id="KW-0472">Membrane</keyword>
<keyword id="KW-1185">Reference proteome</keyword>
<keyword id="KW-0732">Signal</keyword>
<keyword id="KW-0812">Transmembrane</keyword>
<keyword id="KW-1133">Transmembrane helix</keyword>
<comment type="function">
    <text evidence="2">Ligand for the KLRK1 immunosurveillance receptor. Binding to KLRK1 stimulates cell lysis in vitro.</text>
</comment>
<comment type="subcellular location">
    <subcellularLocation>
        <location evidence="2">Cell membrane</location>
        <topology evidence="1">Single-pass type I membrane protein</topology>
    </subcellularLocation>
</comment>
<comment type="tissue specificity">
    <text evidence="2">In strain C57BL/6J, strongly expressed in cardiac muscle and skeletal muscle, with lower expression levels in spleen, liver, kidney and thymus. In strain BALB/cJ, weakly expressed in cardiac muscle, spleen, kidney and thymus.</text>
</comment>
<comment type="induction">
    <text evidence="2">Up-regulated in response to infection by murine cytomegalovirus.</text>
</comment>
<comment type="similarity">
    <text evidence="3">Belongs to the NKG2D ligand family.</text>
</comment>
<sequence length="251" mass="28224">MAKSSLSLNWSLLVLLNFLGATLSTGTDSLSCELTFNHRTLHGQCSVNGKTLLDFGDKKHEGNATEMCADLSQSLRELSEGMRNQQSGNDALNVTTQSQYNQGEFIGGFWAINTDEQHSIYFYPLNMTWRESHSDNSSAMEHWKNKNLEKDIRNVLIIYFSRCLNKLSPHFREMPKSKIKVLDTTQNTNTTQIHPTVNNSQHNSDTQGLSFTWIVIICIGGIVSFMAFMVFAWCMLKKKKGALCCSSSSTT</sequence>
<organism>
    <name type="scientific">Mus musculus</name>
    <name type="common">Mouse</name>
    <dbReference type="NCBI Taxonomy" id="10090"/>
    <lineage>
        <taxon>Eukaryota</taxon>
        <taxon>Metazoa</taxon>
        <taxon>Chordata</taxon>
        <taxon>Craniata</taxon>
        <taxon>Vertebrata</taxon>
        <taxon>Euteleostomi</taxon>
        <taxon>Mammalia</taxon>
        <taxon>Eutheria</taxon>
        <taxon>Euarchontoglires</taxon>
        <taxon>Glires</taxon>
        <taxon>Rodentia</taxon>
        <taxon>Myomorpha</taxon>
        <taxon>Muroidea</taxon>
        <taxon>Muridae</taxon>
        <taxon>Murinae</taxon>
        <taxon>Mus</taxon>
        <taxon>Mus</taxon>
    </lineage>
</organism>
<reference evidence="4" key="1">
    <citation type="journal article" date="2008" name="J. Immunol.">
        <title>Two novel NKG2D ligands of the mouse H60 family with differential expression patterns and binding affinities to NKG2D.</title>
        <authorList>
            <person name="Takada A."/>
            <person name="Yoshida S."/>
            <person name="Kajikawa M."/>
            <person name="Miyatake Y."/>
            <person name="Tomaru U."/>
            <person name="Sakai M."/>
            <person name="Chiba H."/>
            <person name="Maenaka K."/>
            <person name="Kohda D."/>
            <person name="Fugo K."/>
            <person name="Kasahara M."/>
        </authorList>
    </citation>
    <scope>NUCLEOTIDE SEQUENCE [MRNA]</scope>
    <scope>FUNCTION</scope>
    <scope>SUBCELLULAR LOCATION</scope>
    <scope>TISSUE SPECIFICITY</scope>
    <scope>INDUCTION</scope>
    <source>
        <strain evidence="4">C57BL/6J</strain>
    </source>
</reference>
<reference evidence="6" key="2">
    <citation type="journal article" date="2009" name="PLoS Biol.">
        <title>Lineage-specific biology revealed by a finished genome assembly of the mouse.</title>
        <authorList>
            <person name="Church D.M."/>
            <person name="Goodstadt L."/>
            <person name="Hillier L.W."/>
            <person name="Zody M.C."/>
            <person name="Goldstein S."/>
            <person name="She X."/>
            <person name="Bult C.J."/>
            <person name="Agarwala R."/>
            <person name="Cherry J.L."/>
            <person name="DiCuccio M."/>
            <person name="Hlavina W."/>
            <person name="Kapustin Y."/>
            <person name="Meric P."/>
            <person name="Maglott D."/>
            <person name="Birtle Z."/>
            <person name="Marques A.C."/>
            <person name="Graves T."/>
            <person name="Zhou S."/>
            <person name="Teague B."/>
            <person name="Potamousis K."/>
            <person name="Churas C."/>
            <person name="Place M."/>
            <person name="Herschleb J."/>
            <person name="Runnheim R."/>
            <person name="Forrest D."/>
            <person name="Amos-Landgraf J."/>
            <person name="Schwartz D.C."/>
            <person name="Cheng Z."/>
            <person name="Lindblad-Toh K."/>
            <person name="Eichler E.E."/>
            <person name="Ponting C.P."/>
        </authorList>
    </citation>
    <scope>NUCLEOTIDE SEQUENCE [LARGE SCALE GENOMIC DNA]</scope>
    <source>
        <strain>C57BL/6J</strain>
    </source>
</reference>
<feature type="signal peptide" evidence="1">
    <location>
        <begin position="1"/>
        <end position="24"/>
    </location>
</feature>
<feature type="chain" id="PRO_5006716408" description="Histocompatibility antigen 60b">
    <location>
        <begin position="25"/>
        <end position="251"/>
    </location>
</feature>
<feature type="topological domain" description="Extracellular" evidence="3">
    <location>
        <begin position="25"/>
        <end position="212"/>
    </location>
</feature>
<feature type="transmembrane region" description="Helical" evidence="1">
    <location>
        <begin position="213"/>
        <end position="233"/>
    </location>
</feature>
<feature type="topological domain" description="Cytoplasmic" evidence="3">
    <location>
        <begin position="234"/>
        <end position="251"/>
    </location>
</feature>
<feature type="glycosylation site" description="N-linked (GlcNAc...) asparagine" evidence="1">
    <location>
        <position position="63"/>
    </location>
</feature>
<feature type="glycosylation site" description="N-linked (GlcNAc...) asparagine" evidence="1">
    <location>
        <position position="93"/>
    </location>
</feature>
<feature type="glycosylation site" description="N-linked (GlcNAc...) asparagine" evidence="1">
    <location>
        <position position="126"/>
    </location>
</feature>
<feature type="glycosylation site" description="N-linked (GlcNAc...) asparagine" evidence="1">
    <location>
        <position position="189"/>
    </location>
</feature>
<name>H60B_MOUSE</name>
<gene>
    <name evidence="5" type="primary">H60b</name>
</gene>
<protein>
    <recommendedName>
        <fullName evidence="3">Histocompatibility antigen 60b</fullName>
    </recommendedName>
</protein>
<proteinExistence type="evidence at transcript level"/>
<evidence type="ECO:0000255" key="1"/>
<evidence type="ECO:0000269" key="2">
    <source>
    </source>
</evidence>
<evidence type="ECO:0000305" key="3"/>
<evidence type="ECO:0000312" key="4">
    <source>
        <dbReference type="EMBL" id="BAG12558.1"/>
    </source>
</evidence>
<evidence type="ECO:0000312" key="5">
    <source>
        <dbReference type="MGI" id="MGI:3649078"/>
    </source>
</evidence>
<evidence type="ECO:0000312" key="6">
    <source>
        <dbReference type="Proteomes" id="UP000000589"/>
    </source>
</evidence>
<dbReference type="EMBL" id="AB284505">
    <property type="protein sequence ID" value="BAG12558.1"/>
    <property type="molecule type" value="mRNA"/>
</dbReference>
<dbReference type="EMBL" id="AC159136">
    <property type="status" value="NOT_ANNOTATED_CDS"/>
    <property type="molecule type" value="Genomic_DNA"/>
</dbReference>
<dbReference type="EMBL" id="AC170753">
    <property type="status" value="NOT_ANNOTATED_CDS"/>
    <property type="molecule type" value="Genomic_DNA"/>
</dbReference>
<dbReference type="CCDS" id="CCDS48520.1"/>
<dbReference type="RefSeq" id="NP_001171246.1">
    <property type="nucleotide sequence ID" value="NM_001177775.1"/>
</dbReference>
<dbReference type="SMR" id="B1B212"/>
<dbReference type="FunCoup" id="B1B212">
    <property type="interactions" value="1"/>
</dbReference>
<dbReference type="STRING" id="10090.ENSMUSP00000117032"/>
<dbReference type="GlyCosmos" id="B1B212">
    <property type="glycosylation" value="4 sites, No reported glycans"/>
</dbReference>
<dbReference type="GlyGen" id="B1B212">
    <property type="glycosylation" value="4 sites, 1 N-linked glycan (1 site)"/>
</dbReference>
<dbReference type="PaxDb" id="10090-ENSMUSP00000117032"/>
<dbReference type="PeptideAtlas" id="B1B212"/>
<dbReference type="ProteomicsDB" id="271128"/>
<dbReference type="DNASU" id="667281"/>
<dbReference type="Ensembl" id="ENSMUST00000105522.9">
    <property type="protein sequence ID" value="ENSMUSP00000101161.3"/>
    <property type="gene ID" value="ENSMUSG00000075297.11"/>
</dbReference>
<dbReference type="Ensembl" id="ENSMUST00000131558.2">
    <property type="protein sequence ID" value="ENSMUSP00000117032.2"/>
    <property type="gene ID" value="ENSMUSG00000075297.11"/>
</dbReference>
<dbReference type="GeneID" id="667281"/>
<dbReference type="KEGG" id="mmu:667281"/>
<dbReference type="UCSC" id="uc011xbl.1">
    <property type="organism name" value="mouse"/>
</dbReference>
<dbReference type="AGR" id="MGI:3649078"/>
<dbReference type="CTD" id="667281"/>
<dbReference type="MGI" id="MGI:3649078">
    <property type="gene designation" value="H60b"/>
</dbReference>
<dbReference type="VEuPathDB" id="HostDB:ENSMUSG00000075297"/>
<dbReference type="GeneTree" id="ENSGT00940000169591"/>
<dbReference type="HOGENOM" id="CLU_096840_0_0_1"/>
<dbReference type="InParanoid" id="B1B212"/>
<dbReference type="OMA" id="LTWRESH"/>
<dbReference type="OrthoDB" id="95849at9989"/>
<dbReference type="PhylomeDB" id="B1B212"/>
<dbReference type="TreeFam" id="TF339658"/>
<dbReference type="BioGRID-ORCS" id="667281">
    <property type="hits" value="1 hit in 78 CRISPR screens"/>
</dbReference>
<dbReference type="PRO" id="PR:B1B212"/>
<dbReference type="Proteomes" id="UP000000589">
    <property type="component" value="Chromosome 10"/>
</dbReference>
<dbReference type="RNAct" id="B1B212">
    <property type="molecule type" value="protein"/>
</dbReference>
<dbReference type="Bgee" id="ENSMUSG00000075297">
    <property type="expression patterns" value="Expressed in granulocyte and 38 other cell types or tissues"/>
</dbReference>
<dbReference type="GO" id="GO:0016020">
    <property type="term" value="C:membrane"/>
    <property type="evidence" value="ECO:0000314"/>
    <property type="project" value="MGI"/>
</dbReference>
<dbReference type="GO" id="GO:0005886">
    <property type="term" value="C:plasma membrane"/>
    <property type="evidence" value="ECO:0007669"/>
    <property type="project" value="UniProtKB-SubCell"/>
</dbReference>
<dbReference type="GO" id="GO:0046703">
    <property type="term" value="F:natural killer cell lectin-like receptor binding"/>
    <property type="evidence" value="ECO:0000353"/>
    <property type="project" value="MGI"/>
</dbReference>
<dbReference type="GO" id="GO:0042267">
    <property type="term" value="P:natural killer cell mediated cytotoxicity"/>
    <property type="evidence" value="ECO:0000353"/>
    <property type="project" value="MGI"/>
</dbReference>
<dbReference type="FunFam" id="3.30.500.10:FF:000011">
    <property type="entry name" value="Histocompatibility antigen 60b"/>
    <property type="match status" value="1"/>
</dbReference>
<dbReference type="Gene3D" id="3.30.500.10">
    <property type="entry name" value="MHC class I-like antigen recognition-like"/>
    <property type="match status" value="1"/>
</dbReference>
<dbReference type="InterPro" id="IPR037055">
    <property type="entry name" value="MHC_I-like_Ag-recog_sf"/>
</dbReference>
<dbReference type="InterPro" id="IPR011162">
    <property type="entry name" value="MHC_I/II-like_Ag-recog"/>
</dbReference>
<dbReference type="SUPFAM" id="SSF54452">
    <property type="entry name" value="MHC antigen-recognition domain"/>
    <property type="match status" value="1"/>
</dbReference>